<gene>
    <name evidence="8" type="primary">pbpC</name>
    <name type="synonym">ycsM</name>
    <name type="synonym">yzsA</name>
    <name type="ordered locus">BSU04140</name>
</gene>
<proteinExistence type="evidence at protein level"/>
<feature type="chain" id="PRO_0000195464" description="Penicillin-binding protein 3">
    <location>
        <begin position="1"/>
        <end position="668"/>
    </location>
</feature>
<feature type="transmembrane region" description="Helical" evidence="2">
    <location>
        <begin position="7"/>
        <end position="23"/>
    </location>
</feature>
<feature type="active site" description="Acyl-ester intermediate" evidence="1">
    <location>
        <position position="410"/>
    </location>
</feature>
<feature type="mutagenesis site" description="Required for cell division in the presence of a transpeptidase-inactive copy of PBP-2B. Loss of oxacillin and cephalexin resistance." evidence="5">
    <original>S</original>
    <variation>A</variation>
    <location>
        <position position="410"/>
    </location>
</feature>
<feature type="sequence conflict" description="In Ref. 4; AAA22829." evidence="9" ref="4">
    <original>V</original>
    <variation>D</variation>
    <location>
        <position position="9"/>
    </location>
</feature>
<feature type="sequence conflict" description="In Ref. 4; AAA22829." evidence="9" ref="4">
    <original>RMEAFVKQ</original>
    <variation>PLESTAQA</variation>
    <location>
        <begin position="30"/>
        <end position="37"/>
    </location>
</feature>
<organism>
    <name type="scientific">Bacillus subtilis (strain 168)</name>
    <dbReference type="NCBI Taxonomy" id="224308"/>
    <lineage>
        <taxon>Bacteria</taxon>
        <taxon>Bacillati</taxon>
        <taxon>Bacillota</taxon>
        <taxon>Bacilli</taxon>
        <taxon>Bacillales</taxon>
        <taxon>Bacillaceae</taxon>
        <taxon>Bacillus</taxon>
    </lineage>
</organism>
<reference key="1">
    <citation type="journal article" date="1995" name="Microbiology">
        <title>Determination of a 17,484 bp nucleotide sequence around the 39 degrees region of the Bacillus subtilis chromosome and similarity analysis of the products of putative ORFs.</title>
        <authorList>
            <person name="Akagawa E."/>
            <person name="Kurita K."/>
            <person name="Sugawara T."/>
            <person name="Nakamura K."/>
            <person name="Kasahara Y."/>
            <person name="Ogasawara N."/>
            <person name="Yamane K."/>
        </authorList>
    </citation>
    <scope>NUCLEOTIDE SEQUENCE [GENOMIC DNA]</scope>
    <source>
        <strain>168</strain>
    </source>
</reference>
<reference key="2">
    <citation type="journal article" date="1996" name="Microbiology">
        <title>The 25 degrees-36 degrees region of the Bacillus subtilis chromosome: determination of the sequence of a 146 kb segment and identification of 113 genes.</title>
        <authorList>
            <person name="Yamane K."/>
            <person name="Kumano M."/>
            <person name="Kurita K."/>
        </authorList>
    </citation>
    <scope>NUCLEOTIDE SEQUENCE [GENOMIC DNA]</scope>
    <source>
        <strain>168</strain>
    </source>
</reference>
<reference key="3">
    <citation type="journal article" date="1997" name="Nature">
        <title>The complete genome sequence of the Gram-positive bacterium Bacillus subtilis.</title>
        <authorList>
            <person name="Kunst F."/>
            <person name="Ogasawara N."/>
            <person name="Moszer I."/>
            <person name="Albertini A.M."/>
            <person name="Alloni G."/>
            <person name="Azevedo V."/>
            <person name="Bertero M.G."/>
            <person name="Bessieres P."/>
            <person name="Bolotin A."/>
            <person name="Borchert S."/>
            <person name="Borriss R."/>
            <person name="Boursier L."/>
            <person name="Brans A."/>
            <person name="Braun M."/>
            <person name="Brignell S.C."/>
            <person name="Bron S."/>
            <person name="Brouillet S."/>
            <person name="Bruschi C.V."/>
            <person name="Caldwell B."/>
            <person name="Capuano V."/>
            <person name="Carter N.M."/>
            <person name="Choi S.-K."/>
            <person name="Codani J.-J."/>
            <person name="Connerton I.F."/>
            <person name="Cummings N.J."/>
            <person name="Daniel R.A."/>
            <person name="Denizot F."/>
            <person name="Devine K.M."/>
            <person name="Duesterhoeft A."/>
            <person name="Ehrlich S.D."/>
            <person name="Emmerson P.T."/>
            <person name="Entian K.-D."/>
            <person name="Errington J."/>
            <person name="Fabret C."/>
            <person name="Ferrari E."/>
            <person name="Foulger D."/>
            <person name="Fritz C."/>
            <person name="Fujita M."/>
            <person name="Fujita Y."/>
            <person name="Fuma S."/>
            <person name="Galizzi A."/>
            <person name="Galleron N."/>
            <person name="Ghim S.-Y."/>
            <person name="Glaser P."/>
            <person name="Goffeau A."/>
            <person name="Golightly E.J."/>
            <person name="Grandi G."/>
            <person name="Guiseppi G."/>
            <person name="Guy B.J."/>
            <person name="Haga K."/>
            <person name="Haiech J."/>
            <person name="Harwood C.R."/>
            <person name="Henaut A."/>
            <person name="Hilbert H."/>
            <person name="Holsappel S."/>
            <person name="Hosono S."/>
            <person name="Hullo M.-F."/>
            <person name="Itaya M."/>
            <person name="Jones L.-M."/>
            <person name="Joris B."/>
            <person name="Karamata D."/>
            <person name="Kasahara Y."/>
            <person name="Klaerr-Blanchard M."/>
            <person name="Klein C."/>
            <person name="Kobayashi Y."/>
            <person name="Koetter P."/>
            <person name="Koningstein G."/>
            <person name="Krogh S."/>
            <person name="Kumano M."/>
            <person name="Kurita K."/>
            <person name="Lapidus A."/>
            <person name="Lardinois S."/>
            <person name="Lauber J."/>
            <person name="Lazarevic V."/>
            <person name="Lee S.-M."/>
            <person name="Levine A."/>
            <person name="Liu H."/>
            <person name="Masuda S."/>
            <person name="Mauel C."/>
            <person name="Medigue C."/>
            <person name="Medina N."/>
            <person name="Mellado R.P."/>
            <person name="Mizuno M."/>
            <person name="Moestl D."/>
            <person name="Nakai S."/>
            <person name="Noback M."/>
            <person name="Noone D."/>
            <person name="O'Reilly M."/>
            <person name="Ogawa K."/>
            <person name="Ogiwara A."/>
            <person name="Oudega B."/>
            <person name="Park S.-H."/>
            <person name="Parro V."/>
            <person name="Pohl T.M."/>
            <person name="Portetelle D."/>
            <person name="Porwollik S."/>
            <person name="Prescott A.M."/>
            <person name="Presecan E."/>
            <person name="Pujic P."/>
            <person name="Purnelle B."/>
            <person name="Rapoport G."/>
            <person name="Rey M."/>
            <person name="Reynolds S."/>
            <person name="Rieger M."/>
            <person name="Rivolta C."/>
            <person name="Rocha E."/>
            <person name="Roche B."/>
            <person name="Rose M."/>
            <person name="Sadaie Y."/>
            <person name="Sato T."/>
            <person name="Scanlan E."/>
            <person name="Schleich S."/>
            <person name="Schroeter R."/>
            <person name="Scoffone F."/>
            <person name="Sekiguchi J."/>
            <person name="Sekowska A."/>
            <person name="Seror S.J."/>
            <person name="Serror P."/>
            <person name="Shin B.-S."/>
            <person name="Soldo B."/>
            <person name="Sorokin A."/>
            <person name="Tacconi E."/>
            <person name="Takagi T."/>
            <person name="Takahashi H."/>
            <person name="Takemaru K."/>
            <person name="Takeuchi M."/>
            <person name="Tamakoshi A."/>
            <person name="Tanaka T."/>
            <person name="Terpstra P."/>
            <person name="Tognoni A."/>
            <person name="Tosato V."/>
            <person name="Uchiyama S."/>
            <person name="Vandenbol M."/>
            <person name="Vannier F."/>
            <person name="Vassarotti A."/>
            <person name="Viari A."/>
            <person name="Wambutt R."/>
            <person name="Wedler E."/>
            <person name="Wedler H."/>
            <person name="Weitzenegger T."/>
            <person name="Winters P."/>
            <person name="Wipat A."/>
            <person name="Yamamoto H."/>
            <person name="Yamane K."/>
            <person name="Yasumoto K."/>
            <person name="Yata K."/>
            <person name="Yoshida K."/>
            <person name="Yoshikawa H.-F."/>
            <person name="Zumstein E."/>
            <person name="Yoshikawa H."/>
            <person name="Danchin A."/>
        </authorList>
    </citation>
    <scope>NUCLEOTIDE SEQUENCE [LARGE SCALE GENOMIC DNA]</scope>
    <source>
        <strain>168</strain>
    </source>
</reference>
<reference key="4">
    <citation type="journal article" date="1988" name="Gene">
        <title>Characterization of signal-sequence-coding regions selected from the Bacillus subtilis chromosome.</title>
        <authorList>
            <person name="Smith H."/>
            <person name="de Jong A."/>
            <person name="Bron S."/>
            <person name="Venema G."/>
        </authorList>
    </citation>
    <scope>NUCLEOTIDE SEQUENCE [GENOMIC DNA] OF 1-37</scope>
</reference>
<reference key="5">
    <citation type="journal article" date="1996" name="J. Bacteriol.">
        <title>Identification and characterization of pbpC, the gene encoding Bacillus subtilis penicillin-binding protein 3.</title>
        <authorList>
            <person name="Murray T."/>
            <person name="Popham D.L."/>
            <person name="Setlow P."/>
        </authorList>
    </citation>
    <scope>PROTEIN SEQUENCE OF 492-502</scope>
    <scope>IDENTIFICATION OF GENE</scope>
    <scope>INDUCTION</scope>
    <scope>DISRUPTION PHENOTYPE</scope>
    <source>
        <strain>168</strain>
    </source>
</reference>
<reference key="6">
    <citation type="journal article" date="1986" name="J. Bacteriol.">
        <title>Correlation of penicillin-binding protein composition with different functions of two membranes in Bacillus subtilis forespores.</title>
        <authorList>
            <person name="Buchanan C.E."/>
            <person name="Neyman S.L."/>
        </authorList>
    </citation>
    <scope>FUNCTION</scope>
    <scope>SUBCELLULAR LOCATION</scope>
    <scope>DEVELOPMENTAL STAGE</scope>
    <scope>PENICILLIN-BINDING</scope>
    <source>
        <strain>168</strain>
    </source>
</reference>
<reference key="7">
    <citation type="journal article" date="2010" name="Genes Dev.">
        <title>Functional microdomains in bacterial membranes.</title>
        <authorList>
            <person name="Lopez D."/>
            <person name="Kolter R."/>
        </authorList>
    </citation>
    <scope>SUBCELLULAR LOCATION</scope>
    <source>
        <strain>168 / Marburg / ATCC 6051 / DSM 10 / JCM 1465 / NBRC 13719 / NCIMB 3610 / NRRL NRS-744 / VKM B-501</strain>
    </source>
</reference>
<reference key="8">
    <citation type="journal article" date="2012" name="Mol. Microbiol.">
        <title>The biofilm formation defect of a Bacillus subtilis flotillin-defective mutant involves the protease FtsH.</title>
        <authorList>
            <person name="Yepes A."/>
            <person name="Schneider J."/>
            <person name="Mielich B."/>
            <person name="Koch G."/>
            <person name="Garcia-Betancur J.C."/>
            <person name="Ramamurthi K.S."/>
            <person name="Vlamakis H."/>
            <person name="Lopez D."/>
        </authorList>
    </citation>
    <scope>SUBCELLULAR LOCATION</scope>
    <source>
        <strain>168 / Marburg / ATCC 6051 / DSM 10 / JCM 1465 / NBRC 13719 / NCIMB 3610 / NRRL NRS-744 / VKM B-501</strain>
    </source>
</reference>
<reference key="9">
    <citation type="journal article" date="2017" name="Mol. Microbiol.">
        <title>Functional redundancy of division specific penicillin-binding proteins in Bacillus subtilis.</title>
        <authorList>
            <person name="Sassine J."/>
            <person name="Xu M."/>
            <person name="Sidiq K.R."/>
            <person name="Emmins R."/>
            <person name="Errington J."/>
            <person name="Daniel R.A."/>
        </authorList>
    </citation>
    <scope>FUNCTION</scope>
    <scope>DISRUPTION PHENOTYPE</scope>
    <scope>MUTAGENESIS OF SER-410</scope>
    <scope>PENICILLIN-BINDING</scope>
    <source>
        <strain>168</strain>
    </source>
</reference>
<comment type="function">
    <text evidence="5 9 10">Penicillin-binding proteins (PBPs) function in the late steps of murein biosynthesis (Probable). Probably required for both cortical and vegetative peptidoglycan synthesis (Probable). Although not usually required for cell division, in the absence of PBP 2B (pbpB) it becomes essential. Confers resistance to oxacillin and cephalexin (PubMed:28792086).</text>
</comment>
<comment type="catalytic activity">
    <reaction evidence="9">
        <text>Preferential cleavage: (Ac)2-L-Lys-D-Ala-|-D-Ala. Also transpeptidation of peptidyl-alanyl moieties that are N-acyl substituents of D-alanine.</text>
        <dbReference type="EC" id="3.4.16.4"/>
    </reaction>
</comment>
<comment type="pathway">
    <text>Cell wall biogenesis; peptidoglycan biosynthesis.</text>
</comment>
<comment type="subcellular location">
    <subcellularLocation>
        <location evidence="3 4 6">Cell membrane</location>
        <topology evidence="9">Single-pass membrane protein</topology>
    </subcellularLocation>
    <subcellularLocation>
        <location evidence="6">Forespore inner membrane</location>
        <topology evidence="2">Single-pass membrane protein</topology>
    </subcellularLocation>
    <subcellularLocation>
        <location evidence="6">Forespore outer membrane</location>
        <topology>Single-pass membrane protein</topology>
    </subcellularLocation>
    <subcellularLocation>
        <location evidence="3 4">Membrane raft</location>
        <topology evidence="2">Single-pass membrane protein</topology>
    </subcellularLocation>
    <text evidence="3 4 5">Localizes at mid cell; localization requires FtsZ and PBP 2B (pbpB) (PubMed:28792086). Present in detergent-resistant membrane (DRM) fractions that may be equivalent to eukaryotic membrane rafts; these rafts include proteins involved in signaling, molecule trafficking and protein secretion (PubMed:20713508, PubMed:22882210).</text>
</comment>
<comment type="developmental stage">
    <text evidence="6">Present in all growth stages and in both inner and outer forespore membranes.</text>
</comment>
<comment type="induction">
    <text evidence="7">Transcribed during vegetative growth, drops off after entry into stationary phase and the onset of sporulation. Transcription rises again 70-80 minutes after germination.</text>
</comment>
<comment type="disruption phenotype">
    <text evidence="5 7">No visible phenotype in growth, sporulation, spore germination, outgrowth, or spore heat resistance (PubMed:8830698). No visible phenotype in the absence of antibiotics; loss of resistance to oxacillin and cephalexin but not penicillin G. It cannot be deleted in the absence of a catalytically inactive copy of penicillin-binding protein 2B (pbpB) (PubMed:28792086).</text>
</comment>
<comment type="similarity">
    <text evidence="9">Belongs to the transpeptidase family.</text>
</comment>
<accession>P42971</accession>
<accession>P40772</accession>
<dbReference type="EC" id="3.4.16.4" evidence="9"/>
<dbReference type="EMBL" id="D38161">
    <property type="protein sequence ID" value="BAA07365.1"/>
    <property type="molecule type" value="Genomic_DNA"/>
</dbReference>
<dbReference type="EMBL" id="D50453">
    <property type="protein sequence ID" value="BAA09043.1"/>
    <property type="molecule type" value="Genomic_DNA"/>
</dbReference>
<dbReference type="EMBL" id="AL009126">
    <property type="protein sequence ID" value="CAB12221.1"/>
    <property type="molecule type" value="Genomic_DNA"/>
</dbReference>
<dbReference type="EMBL" id="M22913">
    <property type="protein sequence ID" value="AAA22829.1"/>
    <property type="molecule type" value="Genomic_DNA"/>
</dbReference>
<dbReference type="PIR" id="I39902">
    <property type="entry name" value="I39902"/>
</dbReference>
<dbReference type="RefSeq" id="NP_388295.1">
    <property type="nucleotide sequence ID" value="NC_000964.3"/>
</dbReference>
<dbReference type="RefSeq" id="WP_003246590.1">
    <property type="nucleotide sequence ID" value="NZ_OZ025638.1"/>
</dbReference>
<dbReference type="SMR" id="P42971"/>
<dbReference type="FunCoup" id="P42971">
    <property type="interactions" value="29"/>
</dbReference>
<dbReference type="IntAct" id="P42971">
    <property type="interactions" value="1"/>
</dbReference>
<dbReference type="STRING" id="224308.BSU04140"/>
<dbReference type="BindingDB" id="P42971"/>
<dbReference type="ChEMBL" id="CHEMBL3112383"/>
<dbReference type="DrugBank" id="DB00355">
    <property type="generic name" value="Aztreonam"/>
</dbReference>
<dbReference type="DrugBank" id="DB00493">
    <property type="generic name" value="Cefotaxime"/>
</dbReference>
<dbReference type="DrugBank" id="DB01598">
    <property type="generic name" value="Imipenem"/>
</dbReference>
<dbReference type="DrugBank" id="DB04570">
    <property type="generic name" value="Latamoxef"/>
</dbReference>
<dbReference type="DrugCentral" id="P42971"/>
<dbReference type="jPOST" id="P42971"/>
<dbReference type="PaxDb" id="224308-BSU04140"/>
<dbReference type="EnsemblBacteria" id="CAB12221">
    <property type="protein sequence ID" value="CAB12221"/>
    <property type="gene ID" value="BSU_04140"/>
</dbReference>
<dbReference type="GeneID" id="940139"/>
<dbReference type="KEGG" id="bsu:BSU04140"/>
<dbReference type="PATRIC" id="fig|224308.179.peg.440"/>
<dbReference type="eggNOG" id="COG0768">
    <property type="taxonomic scope" value="Bacteria"/>
</dbReference>
<dbReference type="InParanoid" id="P42971"/>
<dbReference type="OrthoDB" id="9766847at2"/>
<dbReference type="PhylomeDB" id="P42971"/>
<dbReference type="BioCyc" id="BSUB:BSU04140-MONOMER"/>
<dbReference type="UniPathway" id="UPA00219"/>
<dbReference type="PRO" id="PR:P42971"/>
<dbReference type="Proteomes" id="UP000001570">
    <property type="component" value="Chromosome"/>
</dbReference>
<dbReference type="GO" id="GO:0045121">
    <property type="term" value="C:membrane raft"/>
    <property type="evidence" value="ECO:0007669"/>
    <property type="project" value="UniProtKB-SubCell"/>
</dbReference>
<dbReference type="GO" id="GO:0005886">
    <property type="term" value="C:plasma membrane"/>
    <property type="evidence" value="ECO:0000318"/>
    <property type="project" value="GO_Central"/>
</dbReference>
<dbReference type="GO" id="GO:0008658">
    <property type="term" value="F:penicillin binding"/>
    <property type="evidence" value="ECO:0000318"/>
    <property type="project" value="GO_Central"/>
</dbReference>
<dbReference type="GO" id="GO:0071972">
    <property type="term" value="F:peptidoglycan L,D-transpeptidase activity"/>
    <property type="evidence" value="ECO:0000318"/>
    <property type="project" value="GO_Central"/>
</dbReference>
<dbReference type="GO" id="GO:0009002">
    <property type="term" value="F:serine-type D-Ala-D-Ala carboxypeptidase activity"/>
    <property type="evidence" value="ECO:0007669"/>
    <property type="project" value="UniProtKB-EC"/>
</dbReference>
<dbReference type="GO" id="GO:0071555">
    <property type="term" value="P:cell wall organization"/>
    <property type="evidence" value="ECO:0000318"/>
    <property type="project" value="GO_Central"/>
</dbReference>
<dbReference type="GO" id="GO:0009252">
    <property type="term" value="P:peptidoglycan biosynthetic process"/>
    <property type="evidence" value="ECO:0007669"/>
    <property type="project" value="UniProtKB-UniPathway"/>
</dbReference>
<dbReference type="GO" id="GO:0006508">
    <property type="term" value="P:proteolysis"/>
    <property type="evidence" value="ECO:0007669"/>
    <property type="project" value="UniProtKB-KW"/>
</dbReference>
<dbReference type="GO" id="GO:0008360">
    <property type="term" value="P:regulation of cell shape"/>
    <property type="evidence" value="ECO:0007669"/>
    <property type="project" value="UniProtKB-KW"/>
</dbReference>
<dbReference type="GO" id="GO:0046677">
    <property type="term" value="P:response to antibiotic"/>
    <property type="evidence" value="ECO:0007669"/>
    <property type="project" value="UniProtKB-KW"/>
</dbReference>
<dbReference type="Gene3D" id="3.40.710.10">
    <property type="entry name" value="DD-peptidase/beta-lactamase superfamily"/>
    <property type="match status" value="1"/>
</dbReference>
<dbReference type="Gene3D" id="3.10.450.100">
    <property type="entry name" value="NTF2-like, domain 1"/>
    <property type="match status" value="1"/>
</dbReference>
<dbReference type="Gene3D" id="3.90.1310.10">
    <property type="entry name" value="Penicillin-binding protein 2a (Domain 2)"/>
    <property type="match status" value="1"/>
</dbReference>
<dbReference type="Gene3D" id="3.30.1390.30">
    <property type="entry name" value="Penicillin-binding protein 2a, domain 3"/>
    <property type="match status" value="1"/>
</dbReference>
<dbReference type="InterPro" id="IPR050515">
    <property type="entry name" value="Bact_Transpept/Beta-Lactamase"/>
</dbReference>
<dbReference type="InterPro" id="IPR012338">
    <property type="entry name" value="Beta-lactam/transpept-like"/>
</dbReference>
<dbReference type="InterPro" id="IPR007887">
    <property type="entry name" value="MecA_N"/>
</dbReference>
<dbReference type="InterPro" id="IPR032710">
    <property type="entry name" value="NTF2-like_dom_sf"/>
</dbReference>
<dbReference type="InterPro" id="IPR005311">
    <property type="entry name" value="PBP_dimer"/>
</dbReference>
<dbReference type="InterPro" id="IPR036138">
    <property type="entry name" value="PBP_dimer_sf"/>
</dbReference>
<dbReference type="InterPro" id="IPR001460">
    <property type="entry name" value="PCN-bd_Tpept"/>
</dbReference>
<dbReference type="PANTHER" id="PTHR30627:SF25">
    <property type="entry name" value="PENICILLIN-BINDING PROTEIN 3"/>
    <property type="match status" value="1"/>
</dbReference>
<dbReference type="PANTHER" id="PTHR30627">
    <property type="entry name" value="PEPTIDOGLYCAN D,D-TRANSPEPTIDASE"/>
    <property type="match status" value="1"/>
</dbReference>
<dbReference type="Pfam" id="PF05223">
    <property type="entry name" value="MecA_N"/>
    <property type="match status" value="1"/>
</dbReference>
<dbReference type="Pfam" id="PF03717">
    <property type="entry name" value="PBP_dimer"/>
    <property type="match status" value="1"/>
</dbReference>
<dbReference type="Pfam" id="PF00905">
    <property type="entry name" value="Transpeptidase"/>
    <property type="match status" value="1"/>
</dbReference>
<dbReference type="SUPFAM" id="SSF56601">
    <property type="entry name" value="beta-lactamase/transpeptidase-like"/>
    <property type="match status" value="1"/>
</dbReference>
<dbReference type="SUPFAM" id="SSF54427">
    <property type="entry name" value="NTF2-like"/>
    <property type="match status" value="1"/>
</dbReference>
<dbReference type="SUPFAM" id="SSF56519">
    <property type="entry name" value="Penicillin binding protein dimerisation domain"/>
    <property type="match status" value="1"/>
</dbReference>
<sequence length="668" mass="74406">MLKKCILLVFLCVGLIGLIGCSKTDSPEDRMEAFVKQWNDQQFDDMYQSLTKDVKKEISKKDFVNRYKAIYEQAGVKNLKVTAGEVDKDDQDNKTMKHIPYKVSMNTNAGKVSFKNTAVLKLEKTDDEESWNIDWDPSFIFKQLADDKTVQIMSIEPKRGQIYDKNGKGLAVNTDVPEIGIVPGELGDKKEKVIKELAKKLDLTEDDIKKKLDQGWVKDDSFVPLKKVKPDQEKLVSEATSLQGVTRTNVSSRYYPYGEKTAHLTGYVRAITAEELKKKKEGTYSDTSNIGIAGLENVYEDKLRGTTGWKIYVPQTGEVIAEKKAKDGEDLHLTIDIKTQMKLYDELKDDSGAAVALQPKTGETLALVSAPSYDPNGFIFGWSDKEWKKLNKDKNNPFSAKFNKTYAPGSTIKPIAAAIGIKNGTLKADEKKTIKGKEWQKDSSWGGYSVTRVSERLQQVDLENALITSDNIYFAQNALDMGADTFTKGLKTFGFSEDVPYEFPIQKSSIANDKLDSDILLADTGYGQGQMQMSPLHLATAYTPFVDNGDLVKPTLIKKDSQTADVWHKQVVTKEGAADITKGLKGVVEDERGSAYQPVVKGITVAGKTGTAELKTSKDDKDGTENGWFVGYDYENKDLLVAMMIQNVQDRGGSHYVVEKAKKQFQSN</sequence>
<protein>
    <recommendedName>
        <fullName>Penicillin-binding protein 3</fullName>
        <shortName>PBP 3</shortName>
        <ecNumber evidence="9">3.4.16.4</ecNumber>
    </recommendedName>
    <alternativeName>
        <fullName>PSPB20</fullName>
    </alternativeName>
    <alternativeName>
        <fullName>Penicillin-binding protein C</fullName>
    </alternativeName>
</protein>
<evidence type="ECO:0000250" key="1">
    <source>
        <dbReference type="UniProtKB" id="P0AD65"/>
    </source>
</evidence>
<evidence type="ECO:0000255" key="2"/>
<evidence type="ECO:0000269" key="3">
    <source>
    </source>
</evidence>
<evidence type="ECO:0000269" key="4">
    <source>
    </source>
</evidence>
<evidence type="ECO:0000269" key="5">
    <source>
    </source>
</evidence>
<evidence type="ECO:0000269" key="6">
    <source>
    </source>
</evidence>
<evidence type="ECO:0000269" key="7">
    <source>
    </source>
</evidence>
<evidence type="ECO:0000303" key="8">
    <source>
    </source>
</evidence>
<evidence type="ECO:0000305" key="9"/>
<evidence type="ECO:0000305" key="10">
    <source>
    </source>
</evidence>
<keyword id="KW-0046">Antibiotic resistance</keyword>
<keyword id="KW-0121">Carboxypeptidase</keyword>
<keyword id="KW-1003">Cell membrane</keyword>
<keyword id="KW-0133">Cell shape</keyword>
<keyword id="KW-0961">Cell wall biogenesis/degradation</keyword>
<keyword id="KW-0903">Direct protein sequencing</keyword>
<keyword id="KW-0378">Hydrolase</keyword>
<keyword id="KW-0472">Membrane</keyword>
<keyword id="KW-0573">Peptidoglycan synthesis</keyword>
<keyword id="KW-0645">Protease</keyword>
<keyword id="KW-1185">Reference proteome</keyword>
<keyword id="KW-0812">Transmembrane</keyword>
<keyword id="KW-1133">Transmembrane helix</keyword>
<name>PBPC_BACSU</name>